<comment type="function">
    <text evidence="1">Catalyzes the reversible conversion of 2-phosphoglycerate (2-PG) into phosphoenolpyruvate (PEP). It is essential for the degradation of carbohydrates via glycolysis.</text>
</comment>
<comment type="catalytic activity">
    <reaction evidence="1">
        <text>(2R)-2-phosphoglycerate = phosphoenolpyruvate + H2O</text>
        <dbReference type="Rhea" id="RHEA:10164"/>
        <dbReference type="ChEBI" id="CHEBI:15377"/>
        <dbReference type="ChEBI" id="CHEBI:58289"/>
        <dbReference type="ChEBI" id="CHEBI:58702"/>
        <dbReference type="EC" id="4.2.1.11"/>
    </reaction>
</comment>
<comment type="cofactor">
    <cofactor evidence="1">
        <name>Mg(2+)</name>
        <dbReference type="ChEBI" id="CHEBI:18420"/>
    </cofactor>
    <text evidence="1">Binds a second Mg(2+) ion via substrate during catalysis.</text>
</comment>
<comment type="pathway">
    <text evidence="1">Carbohydrate degradation; glycolysis; pyruvate from D-glyceraldehyde 3-phosphate: step 4/5.</text>
</comment>
<comment type="subcellular location">
    <subcellularLocation>
        <location evidence="1">Cytoplasm</location>
    </subcellularLocation>
    <subcellularLocation>
        <location evidence="1">Secreted</location>
    </subcellularLocation>
    <subcellularLocation>
        <location evidence="1">Cell surface</location>
    </subcellularLocation>
    <text evidence="1">Fractions of enolase are present in both the cytoplasm and on the cell surface.</text>
</comment>
<comment type="similarity">
    <text evidence="1">Belongs to the enolase family.</text>
</comment>
<dbReference type="EC" id="4.2.1.11" evidence="1"/>
<dbReference type="EMBL" id="CP000686">
    <property type="protein sequence ID" value="ABQ92863.1"/>
    <property type="molecule type" value="Genomic_DNA"/>
</dbReference>
<dbReference type="RefSeq" id="WP_011959200.1">
    <property type="nucleotide sequence ID" value="NC_009523.1"/>
</dbReference>
<dbReference type="SMR" id="A5V1W0"/>
<dbReference type="STRING" id="357808.RoseRS_4532"/>
<dbReference type="KEGG" id="rrs:RoseRS_4532"/>
<dbReference type="eggNOG" id="COG0148">
    <property type="taxonomic scope" value="Bacteria"/>
</dbReference>
<dbReference type="HOGENOM" id="CLU_031223_2_1_0"/>
<dbReference type="OrthoDB" id="9804716at2"/>
<dbReference type="UniPathway" id="UPA00109">
    <property type="reaction ID" value="UER00187"/>
</dbReference>
<dbReference type="Proteomes" id="UP000006554">
    <property type="component" value="Chromosome"/>
</dbReference>
<dbReference type="GO" id="GO:0009986">
    <property type="term" value="C:cell surface"/>
    <property type="evidence" value="ECO:0007669"/>
    <property type="project" value="UniProtKB-SubCell"/>
</dbReference>
<dbReference type="GO" id="GO:0005576">
    <property type="term" value="C:extracellular region"/>
    <property type="evidence" value="ECO:0007669"/>
    <property type="project" value="UniProtKB-SubCell"/>
</dbReference>
<dbReference type="GO" id="GO:0000015">
    <property type="term" value="C:phosphopyruvate hydratase complex"/>
    <property type="evidence" value="ECO:0007669"/>
    <property type="project" value="InterPro"/>
</dbReference>
<dbReference type="GO" id="GO:0000287">
    <property type="term" value="F:magnesium ion binding"/>
    <property type="evidence" value="ECO:0007669"/>
    <property type="project" value="UniProtKB-UniRule"/>
</dbReference>
<dbReference type="GO" id="GO:0004634">
    <property type="term" value="F:phosphopyruvate hydratase activity"/>
    <property type="evidence" value="ECO:0007669"/>
    <property type="project" value="UniProtKB-UniRule"/>
</dbReference>
<dbReference type="GO" id="GO:0006096">
    <property type="term" value="P:glycolytic process"/>
    <property type="evidence" value="ECO:0007669"/>
    <property type="project" value="UniProtKB-UniRule"/>
</dbReference>
<dbReference type="CDD" id="cd03313">
    <property type="entry name" value="enolase"/>
    <property type="match status" value="1"/>
</dbReference>
<dbReference type="FunFam" id="3.20.20.120:FF:000001">
    <property type="entry name" value="Enolase"/>
    <property type="match status" value="1"/>
</dbReference>
<dbReference type="FunFam" id="3.30.390.10:FF:000001">
    <property type="entry name" value="Enolase"/>
    <property type="match status" value="1"/>
</dbReference>
<dbReference type="Gene3D" id="3.20.20.120">
    <property type="entry name" value="Enolase-like C-terminal domain"/>
    <property type="match status" value="1"/>
</dbReference>
<dbReference type="Gene3D" id="3.30.390.10">
    <property type="entry name" value="Enolase-like, N-terminal domain"/>
    <property type="match status" value="1"/>
</dbReference>
<dbReference type="HAMAP" id="MF_00318">
    <property type="entry name" value="Enolase"/>
    <property type="match status" value="1"/>
</dbReference>
<dbReference type="InterPro" id="IPR000941">
    <property type="entry name" value="Enolase"/>
</dbReference>
<dbReference type="InterPro" id="IPR036849">
    <property type="entry name" value="Enolase-like_C_sf"/>
</dbReference>
<dbReference type="InterPro" id="IPR029017">
    <property type="entry name" value="Enolase-like_N"/>
</dbReference>
<dbReference type="InterPro" id="IPR020810">
    <property type="entry name" value="Enolase_C"/>
</dbReference>
<dbReference type="InterPro" id="IPR020809">
    <property type="entry name" value="Enolase_CS"/>
</dbReference>
<dbReference type="InterPro" id="IPR020811">
    <property type="entry name" value="Enolase_N"/>
</dbReference>
<dbReference type="NCBIfam" id="TIGR01060">
    <property type="entry name" value="eno"/>
    <property type="match status" value="1"/>
</dbReference>
<dbReference type="PANTHER" id="PTHR11902">
    <property type="entry name" value="ENOLASE"/>
    <property type="match status" value="1"/>
</dbReference>
<dbReference type="PANTHER" id="PTHR11902:SF1">
    <property type="entry name" value="ENOLASE"/>
    <property type="match status" value="1"/>
</dbReference>
<dbReference type="Pfam" id="PF00113">
    <property type="entry name" value="Enolase_C"/>
    <property type="match status" value="1"/>
</dbReference>
<dbReference type="Pfam" id="PF03952">
    <property type="entry name" value="Enolase_N"/>
    <property type="match status" value="1"/>
</dbReference>
<dbReference type="PIRSF" id="PIRSF001400">
    <property type="entry name" value="Enolase"/>
    <property type="match status" value="1"/>
</dbReference>
<dbReference type="PRINTS" id="PR00148">
    <property type="entry name" value="ENOLASE"/>
</dbReference>
<dbReference type="SFLD" id="SFLDS00001">
    <property type="entry name" value="Enolase"/>
    <property type="match status" value="1"/>
</dbReference>
<dbReference type="SFLD" id="SFLDF00002">
    <property type="entry name" value="enolase"/>
    <property type="match status" value="1"/>
</dbReference>
<dbReference type="SMART" id="SM01192">
    <property type="entry name" value="Enolase_C"/>
    <property type="match status" value="1"/>
</dbReference>
<dbReference type="SMART" id="SM01193">
    <property type="entry name" value="Enolase_N"/>
    <property type="match status" value="1"/>
</dbReference>
<dbReference type="SUPFAM" id="SSF51604">
    <property type="entry name" value="Enolase C-terminal domain-like"/>
    <property type="match status" value="1"/>
</dbReference>
<dbReference type="SUPFAM" id="SSF54826">
    <property type="entry name" value="Enolase N-terminal domain-like"/>
    <property type="match status" value="1"/>
</dbReference>
<dbReference type="PROSITE" id="PS00164">
    <property type="entry name" value="ENOLASE"/>
    <property type="match status" value="1"/>
</dbReference>
<protein>
    <recommendedName>
        <fullName evidence="1">Enolase</fullName>
        <ecNumber evidence="1">4.2.1.11</ecNumber>
    </recommendedName>
    <alternativeName>
        <fullName evidence="1">2-phospho-D-glycerate hydro-lyase</fullName>
    </alternativeName>
    <alternativeName>
        <fullName evidence="1">2-phosphoglycerate dehydratase</fullName>
    </alternativeName>
</protein>
<feature type="chain" id="PRO_0000337619" description="Enolase">
    <location>
        <begin position="1"/>
        <end position="429"/>
    </location>
</feature>
<feature type="active site" description="Proton donor" evidence="1">
    <location>
        <position position="207"/>
    </location>
</feature>
<feature type="active site" description="Proton acceptor" evidence="1">
    <location>
        <position position="339"/>
    </location>
</feature>
<feature type="binding site" evidence="1">
    <location>
        <position position="165"/>
    </location>
    <ligand>
        <name>(2R)-2-phosphoglycerate</name>
        <dbReference type="ChEBI" id="CHEBI:58289"/>
    </ligand>
</feature>
<feature type="binding site" evidence="1">
    <location>
        <position position="244"/>
    </location>
    <ligand>
        <name>Mg(2+)</name>
        <dbReference type="ChEBI" id="CHEBI:18420"/>
    </ligand>
</feature>
<feature type="binding site" evidence="1">
    <location>
        <position position="287"/>
    </location>
    <ligand>
        <name>Mg(2+)</name>
        <dbReference type="ChEBI" id="CHEBI:18420"/>
    </ligand>
</feature>
<feature type="binding site" evidence="1">
    <location>
        <position position="314"/>
    </location>
    <ligand>
        <name>Mg(2+)</name>
        <dbReference type="ChEBI" id="CHEBI:18420"/>
    </ligand>
</feature>
<feature type="binding site" evidence="1">
    <location>
        <position position="339"/>
    </location>
    <ligand>
        <name>(2R)-2-phosphoglycerate</name>
        <dbReference type="ChEBI" id="CHEBI:58289"/>
    </ligand>
</feature>
<feature type="binding site" evidence="1">
    <location>
        <position position="368"/>
    </location>
    <ligand>
        <name>(2R)-2-phosphoglycerate</name>
        <dbReference type="ChEBI" id="CHEBI:58289"/>
    </ligand>
</feature>
<feature type="binding site" evidence="1">
    <location>
        <position position="369"/>
    </location>
    <ligand>
        <name>(2R)-2-phosphoglycerate</name>
        <dbReference type="ChEBI" id="CHEBI:58289"/>
    </ligand>
</feature>
<feature type="binding site" evidence="1">
    <location>
        <position position="390"/>
    </location>
    <ligand>
        <name>(2R)-2-phosphoglycerate</name>
        <dbReference type="ChEBI" id="CHEBI:58289"/>
    </ligand>
</feature>
<reference key="1">
    <citation type="submission" date="2007-04" db="EMBL/GenBank/DDBJ databases">
        <title>Complete sequence of Roseiflexus sp. RS-1.</title>
        <authorList>
            <consortium name="US DOE Joint Genome Institute"/>
            <person name="Copeland A."/>
            <person name="Lucas S."/>
            <person name="Lapidus A."/>
            <person name="Barry K."/>
            <person name="Detter J.C."/>
            <person name="Glavina del Rio T."/>
            <person name="Hammon N."/>
            <person name="Israni S."/>
            <person name="Dalin E."/>
            <person name="Tice H."/>
            <person name="Pitluck S."/>
            <person name="Chertkov O."/>
            <person name="Brettin T."/>
            <person name="Bruce D."/>
            <person name="Han C."/>
            <person name="Schmutz J."/>
            <person name="Larimer F."/>
            <person name="Land M."/>
            <person name="Hauser L."/>
            <person name="Kyrpides N."/>
            <person name="Mikhailova N."/>
            <person name="Bryant D.A."/>
            <person name="Richardson P."/>
        </authorList>
    </citation>
    <scope>NUCLEOTIDE SEQUENCE [LARGE SCALE GENOMIC DNA]</scope>
    <source>
        <strain>RS-1</strain>
    </source>
</reference>
<proteinExistence type="inferred from homology"/>
<accession>A5V1W0</accession>
<gene>
    <name evidence="1" type="primary">eno</name>
    <name type="ordered locus">RoseRS_4532</name>
</gene>
<name>ENO_ROSS1</name>
<organism>
    <name type="scientific">Roseiflexus sp. (strain RS-1)</name>
    <dbReference type="NCBI Taxonomy" id="357808"/>
    <lineage>
        <taxon>Bacteria</taxon>
        <taxon>Bacillati</taxon>
        <taxon>Chloroflexota</taxon>
        <taxon>Chloroflexia</taxon>
        <taxon>Chloroflexales</taxon>
        <taxon>Roseiflexineae</taxon>
        <taxon>Roseiflexaceae</taxon>
        <taxon>Roseiflexus</taxon>
    </lineage>
</organism>
<evidence type="ECO:0000255" key="1">
    <source>
        <dbReference type="HAMAP-Rule" id="MF_00318"/>
    </source>
</evidence>
<sequence length="429" mass="46389">MADTIIEAITAREVLDSRGNPTIEVDVYVESGDMGRAIVPSGASTGAFEALELRDGDKSRYGGKGVLKAVEHVNTTIAEALEGEDAADQVSIDRKLIELDGTENKGRLGANAILGVSLACAKAAAAAHDLPLYRYLGGVHAHVLPVPMMNILNGGKHAQNSTDFQEFMIMPVGAPSFREALRWGSEIYQSLKKVIHDRGGSTNVGDEGGFAPSLPTNEAALQIIMEAIERAGYKPGEQVMLAMDPACTELYKDGKYHLEREGRSLTSAEMVEYWDDIAARYPLISLEDGLAEEDWEGWKLLRARLGDRIQLVGDDFLVTNVKRLARAISEQAANSILIKLNQIGTLTETLDAISMANRAGWTAVVSHRSGESEDVTIADLVVATNAGQIKTGAPARTDRVAKYNQLLRIEEELGSAAHYAGMGAFRIRR</sequence>
<keyword id="KW-0963">Cytoplasm</keyword>
<keyword id="KW-0324">Glycolysis</keyword>
<keyword id="KW-0456">Lyase</keyword>
<keyword id="KW-0460">Magnesium</keyword>
<keyword id="KW-0479">Metal-binding</keyword>
<keyword id="KW-0964">Secreted</keyword>